<comment type="catalytic activity">
    <reaction evidence="1">
        <text>L-citrulline + L-aspartate + ATP = 2-(N(omega)-L-arginino)succinate + AMP + diphosphate + H(+)</text>
        <dbReference type="Rhea" id="RHEA:10932"/>
        <dbReference type="ChEBI" id="CHEBI:15378"/>
        <dbReference type="ChEBI" id="CHEBI:29991"/>
        <dbReference type="ChEBI" id="CHEBI:30616"/>
        <dbReference type="ChEBI" id="CHEBI:33019"/>
        <dbReference type="ChEBI" id="CHEBI:57472"/>
        <dbReference type="ChEBI" id="CHEBI:57743"/>
        <dbReference type="ChEBI" id="CHEBI:456215"/>
        <dbReference type="EC" id="6.3.4.5"/>
    </reaction>
</comment>
<comment type="pathway">
    <text evidence="1">Amino-acid biosynthesis; L-arginine biosynthesis; L-arginine from L-ornithine and carbamoyl phosphate: step 2/3.</text>
</comment>
<comment type="subunit">
    <text evidence="1">Homotetramer.</text>
</comment>
<comment type="subcellular location">
    <subcellularLocation>
        <location evidence="1">Cytoplasm</location>
    </subcellularLocation>
</comment>
<comment type="similarity">
    <text evidence="1">Belongs to the argininosuccinate synthase family. Type 2 subfamily.</text>
</comment>
<keyword id="KW-0028">Amino-acid biosynthesis</keyword>
<keyword id="KW-0055">Arginine biosynthesis</keyword>
<keyword id="KW-0067">ATP-binding</keyword>
<keyword id="KW-0963">Cytoplasm</keyword>
<keyword id="KW-0436">Ligase</keyword>
<keyword id="KW-0547">Nucleotide-binding</keyword>
<accession>B1JPT9</accession>
<dbReference type="EC" id="6.3.4.5" evidence="1"/>
<dbReference type="EMBL" id="CP000950">
    <property type="protein sequence ID" value="ACA68782.1"/>
    <property type="molecule type" value="Genomic_DNA"/>
</dbReference>
<dbReference type="RefSeq" id="WP_002211920.1">
    <property type="nucleotide sequence ID" value="NZ_CP009792.1"/>
</dbReference>
<dbReference type="SMR" id="B1JPT9"/>
<dbReference type="GeneID" id="96665184"/>
<dbReference type="KEGG" id="ypy:YPK_2505"/>
<dbReference type="PATRIC" id="fig|502800.11.peg.3197"/>
<dbReference type="UniPathway" id="UPA00068">
    <property type="reaction ID" value="UER00113"/>
</dbReference>
<dbReference type="GO" id="GO:0005737">
    <property type="term" value="C:cytoplasm"/>
    <property type="evidence" value="ECO:0007669"/>
    <property type="project" value="UniProtKB-SubCell"/>
</dbReference>
<dbReference type="GO" id="GO:0004055">
    <property type="term" value="F:argininosuccinate synthase activity"/>
    <property type="evidence" value="ECO:0007669"/>
    <property type="project" value="UniProtKB-UniRule"/>
</dbReference>
<dbReference type="GO" id="GO:0005524">
    <property type="term" value="F:ATP binding"/>
    <property type="evidence" value="ECO:0007669"/>
    <property type="project" value="UniProtKB-UniRule"/>
</dbReference>
<dbReference type="GO" id="GO:0042803">
    <property type="term" value="F:protein homodimerization activity"/>
    <property type="evidence" value="ECO:0007669"/>
    <property type="project" value="InterPro"/>
</dbReference>
<dbReference type="GO" id="GO:0000053">
    <property type="term" value="P:argininosuccinate metabolic process"/>
    <property type="evidence" value="ECO:0007669"/>
    <property type="project" value="TreeGrafter"/>
</dbReference>
<dbReference type="GO" id="GO:0006526">
    <property type="term" value="P:L-arginine biosynthetic process"/>
    <property type="evidence" value="ECO:0007669"/>
    <property type="project" value="UniProtKB-UniRule"/>
</dbReference>
<dbReference type="GO" id="GO:0000050">
    <property type="term" value="P:urea cycle"/>
    <property type="evidence" value="ECO:0007669"/>
    <property type="project" value="TreeGrafter"/>
</dbReference>
<dbReference type="CDD" id="cd01999">
    <property type="entry name" value="ASS"/>
    <property type="match status" value="1"/>
</dbReference>
<dbReference type="FunFam" id="1.10.287.400:FF:000001">
    <property type="entry name" value="Argininosuccinate synthase"/>
    <property type="match status" value="1"/>
</dbReference>
<dbReference type="Gene3D" id="1.10.287.400">
    <property type="match status" value="1"/>
</dbReference>
<dbReference type="Gene3D" id="3.90.1260.10">
    <property type="entry name" value="Argininosuccinate synthetase, chain A, domain 2"/>
    <property type="match status" value="1"/>
</dbReference>
<dbReference type="Gene3D" id="3.40.50.620">
    <property type="entry name" value="HUPs"/>
    <property type="match status" value="1"/>
</dbReference>
<dbReference type="HAMAP" id="MF_00581">
    <property type="entry name" value="Arg_succ_synth_type2"/>
    <property type="match status" value="1"/>
</dbReference>
<dbReference type="InterPro" id="IPR023437">
    <property type="entry name" value="Arg_succ_synth_type2_subfam"/>
</dbReference>
<dbReference type="InterPro" id="IPR048268">
    <property type="entry name" value="Arginosuc_syn_C"/>
</dbReference>
<dbReference type="InterPro" id="IPR048267">
    <property type="entry name" value="Arginosuc_syn_N"/>
</dbReference>
<dbReference type="InterPro" id="IPR001518">
    <property type="entry name" value="Arginosuc_synth"/>
</dbReference>
<dbReference type="InterPro" id="IPR018223">
    <property type="entry name" value="Arginosuc_synth_CS"/>
</dbReference>
<dbReference type="InterPro" id="IPR023434">
    <property type="entry name" value="Arginosuc_synth_type_1_subfam"/>
</dbReference>
<dbReference type="InterPro" id="IPR024074">
    <property type="entry name" value="AS_cat/multimer_dom_body"/>
</dbReference>
<dbReference type="InterPro" id="IPR024073">
    <property type="entry name" value="AS_multimer_C_tail"/>
</dbReference>
<dbReference type="InterPro" id="IPR014729">
    <property type="entry name" value="Rossmann-like_a/b/a_fold"/>
</dbReference>
<dbReference type="NCBIfam" id="TIGR00032">
    <property type="entry name" value="argG"/>
    <property type="match status" value="1"/>
</dbReference>
<dbReference type="NCBIfam" id="NF003779">
    <property type="entry name" value="PRK05370.1"/>
    <property type="match status" value="1"/>
</dbReference>
<dbReference type="PANTHER" id="PTHR11587">
    <property type="entry name" value="ARGININOSUCCINATE SYNTHASE"/>
    <property type="match status" value="1"/>
</dbReference>
<dbReference type="PANTHER" id="PTHR11587:SF2">
    <property type="entry name" value="ARGININOSUCCINATE SYNTHASE"/>
    <property type="match status" value="1"/>
</dbReference>
<dbReference type="Pfam" id="PF20979">
    <property type="entry name" value="Arginosuc_syn_C"/>
    <property type="match status" value="1"/>
</dbReference>
<dbReference type="Pfam" id="PF00764">
    <property type="entry name" value="Arginosuc_synth"/>
    <property type="match status" value="1"/>
</dbReference>
<dbReference type="SUPFAM" id="SSF52402">
    <property type="entry name" value="Adenine nucleotide alpha hydrolases-like"/>
    <property type="match status" value="1"/>
</dbReference>
<dbReference type="SUPFAM" id="SSF69864">
    <property type="entry name" value="Argininosuccinate synthetase, C-terminal domain"/>
    <property type="match status" value="1"/>
</dbReference>
<dbReference type="PROSITE" id="PS00564">
    <property type="entry name" value="ARGININOSUCCIN_SYN_1"/>
    <property type="match status" value="1"/>
</dbReference>
<dbReference type="PROSITE" id="PS00565">
    <property type="entry name" value="ARGININOSUCCIN_SYN_2"/>
    <property type="match status" value="1"/>
</dbReference>
<proteinExistence type="inferred from homology"/>
<reference key="1">
    <citation type="submission" date="2008-02" db="EMBL/GenBank/DDBJ databases">
        <title>Complete sequence of Yersinia pseudotuberculosis YPIII.</title>
        <authorList>
            <consortium name="US DOE Joint Genome Institute"/>
            <person name="Copeland A."/>
            <person name="Lucas S."/>
            <person name="Lapidus A."/>
            <person name="Glavina del Rio T."/>
            <person name="Dalin E."/>
            <person name="Tice H."/>
            <person name="Bruce D."/>
            <person name="Goodwin L."/>
            <person name="Pitluck S."/>
            <person name="Munk A.C."/>
            <person name="Brettin T."/>
            <person name="Detter J.C."/>
            <person name="Han C."/>
            <person name="Tapia R."/>
            <person name="Schmutz J."/>
            <person name="Larimer F."/>
            <person name="Land M."/>
            <person name="Hauser L."/>
            <person name="Challacombe J.F."/>
            <person name="Green L."/>
            <person name="Lindler L.E."/>
            <person name="Nikolich M.P."/>
            <person name="Richardson P."/>
        </authorList>
    </citation>
    <scope>NUCLEOTIDE SEQUENCE [LARGE SCALE GENOMIC DNA]</scope>
    <source>
        <strain>YPIII</strain>
    </source>
</reference>
<gene>
    <name evidence="1" type="primary">argG</name>
    <name type="ordered locus">YPK_2505</name>
</gene>
<protein>
    <recommendedName>
        <fullName evidence="1">Argininosuccinate synthase</fullName>
        <ecNumber evidence="1">6.3.4.5</ecNumber>
    </recommendedName>
    <alternativeName>
        <fullName evidence="1">Citrulline--aspartate ligase</fullName>
    </alternativeName>
</protein>
<organism>
    <name type="scientific">Yersinia pseudotuberculosis serotype O:3 (strain YPIII)</name>
    <dbReference type="NCBI Taxonomy" id="502800"/>
    <lineage>
        <taxon>Bacteria</taxon>
        <taxon>Pseudomonadati</taxon>
        <taxon>Pseudomonadota</taxon>
        <taxon>Gammaproteobacteria</taxon>
        <taxon>Enterobacterales</taxon>
        <taxon>Yersiniaceae</taxon>
        <taxon>Yersinia</taxon>
    </lineage>
</organism>
<evidence type="ECO:0000255" key="1">
    <source>
        <dbReference type="HAMAP-Rule" id="MF_00581"/>
    </source>
</evidence>
<evidence type="ECO:0000256" key="2">
    <source>
        <dbReference type="SAM" id="MobiDB-lite"/>
    </source>
</evidence>
<sequence>MTTILKHLPINQRVGIAFSGGLDTSAALLWMQKKGAIPYAYTANLGQPDEEDYEAIPRKAMEYGAEKARLIDCRKQLVAEGIAAIQCGAFHNTTAGVTYFNTTPLGRAVTGTMLVAAMKEDDVNIWGDGSTYKGNDIERFYRYGLLTNAELKIYKPWLDTDFIDELGGRHEMSEFMIQSGFDYKMSTEKAYSTDSNMLGATHEAKDLEFLNSSVKIVNPIMGVKFWDENVVVKAEEVTVRFERGYPVALNGVVFDDSVELMMEANRIGGRHGLGMSDQIENRIIEAKSRGIYEAPGMALLHIAYERLLTGIHNEDTIEQYHANGRVLGRLLYQGRWFDPQALMLRDSIQRWVASEITGEVTLELRRGNDYSILNTVSDNLTYKPERLTMEKGDSVFSPDDRIGQLTMRNLDITDTREKLFNYVETGLLTSSAATGLPQVDNNNLSSGRGLQDKRQ</sequence>
<name>ASSY_YERPY</name>
<feature type="chain" id="PRO_1000129773" description="Argininosuccinate synthase">
    <location>
        <begin position="1"/>
        <end position="455"/>
    </location>
</feature>
<feature type="region of interest" description="Disordered" evidence="2">
    <location>
        <begin position="434"/>
        <end position="455"/>
    </location>
</feature>
<feature type="compositionally biased region" description="Polar residues" evidence="2">
    <location>
        <begin position="434"/>
        <end position="448"/>
    </location>
</feature>
<feature type="binding site" evidence="1">
    <location>
        <begin position="17"/>
        <end position="25"/>
    </location>
    <ligand>
        <name>ATP</name>
        <dbReference type="ChEBI" id="CHEBI:30616"/>
    </ligand>
</feature>
<feature type="binding site" evidence="1">
    <location>
        <position position="43"/>
    </location>
    <ligand>
        <name>ATP</name>
        <dbReference type="ChEBI" id="CHEBI:30616"/>
    </ligand>
</feature>
<feature type="binding site" evidence="1">
    <location>
        <position position="99"/>
    </location>
    <ligand>
        <name>L-citrulline</name>
        <dbReference type="ChEBI" id="CHEBI:57743"/>
    </ligand>
</feature>
<feature type="binding site" evidence="1">
    <location>
        <position position="129"/>
    </location>
    <ligand>
        <name>ATP</name>
        <dbReference type="ChEBI" id="CHEBI:30616"/>
    </ligand>
</feature>
<feature type="binding site" evidence="1">
    <location>
        <position position="131"/>
    </location>
    <ligand>
        <name>ATP</name>
        <dbReference type="ChEBI" id="CHEBI:30616"/>
    </ligand>
</feature>
<feature type="binding site" evidence="1">
    <location>
        <position position="131"/>
    </location>
    <ligand>
        <name>L-aspartate</name>
        <dbReference type="ChEBI" id="CHEBI:29991"/>
    </ligand>
</feature>
<feature type="binding site" evidence="1">
    <location>
        <position position="135"/>
    </location>
    <ligand>
        <name>L-aspartate</name>
        <dbReference type="ChEBI" id="CHEBI:29991"/>
    </ligand>
</feature>
<feature type="binding site" evidence="1">
    <location>
        <position position="135"/>
    </location>
    <ligand>
        <name>L-citrulline</name>
        <dbReference type="ChEBI" id="CHEBI:57743"/>
    </ligand>
</feature>
<feature type="binding site" evidence="1">
    <location>
        <position position="136"/>
    </location>
    <ligand>
        <name>ATP</name>
        <dbReference type="ChEBI" id="CHEBI:30616"/>
    </ligand>
</feature>
<feature type="binding site" evidence="1">
    <location>
        <position position="136"/>
    </location>
    <ligand>
        <name>L-aspartate</name>
        <dbReference type="ChEBI" id="CHEBI:29991"/>
    </ligand>
</feature>
<feature type="binding site" evidence="1">
    <location>
        <position position="139"/>
    </location>
    <ligand>
        <name>L-citrulline</name>
        <dbReference type="ChEBI" id="CHEBI:57743"/>
    </ligand>
</feature>
<feature type="binding site" evidence="1">
    <location>
        <position position="192"/>
    </location>
    <ligand>
        <name>L-citrulline</name>
        <dbReference type="ChEBI" id="CHEBI:57743"/>
    </ligand>
</feature>
<feature type="binding site" evidence="1">
    <location>
        <position position="194"/>
    </location>
    <ligand>
        <name>ATP</name>
        <dbReference type="ChEBI" id="CHEBI:30616"/>
    </ligand>
</feature>
<feature type="binding site" evidence="1">
    <location>
        <position position="201"/>
    </location>
    <ligand>
        <name>L-citrulline</name>
        <dbReference type="ChEBI" id="CHEBI:57743"/>
    </ligand>
</feature>
<feature type="binding site" evidence="1">
    <location>
        <position position="203"/>
    </location>
    <ligand>
        <name>L-citrulline</name>
        <dbReference type="ChEBI" id="CHEBI:57743"/>
    </ligand>
</feature>
<feature type="binding site" evidence="1">
    <location>
        <position position="280"/>
    </location>
    <ligand>
        <name>L-citrulline</name>
        <dbReference type="ChEBI" id="CHEBI:57743"/>
    </ligand>
</feature>